<name>LDHA_ELEMC</name>
<reference key="1">
    <citation type="journal article" date="1998" name="Proc. Natl. Acad. Sci. U.S.A.">
        <title>Hot spots in cold adaptation: localized increases in conformational flexibility in lactate dehydrogenase A4 orthologs of Antarctic notothenioid fishes.</title>
        <authorList>
            <person name="Fields P.A."/>
            <person name="Somero G.N."/>
        </authorList>
    </citation>
    <scope>NUCLEOTIDE SEQUENCE [MRNA]</scope>
    <source>
        <tissue>Muscle</tissue>
    </source>
</reference>
<accession>O93542</accession>
<comment type="function">
    <text evidence="2">Interconverts simultaneously and stereospecifically pyruvate and lactate with concomitant interconversion of NADH and NAD(+).</text>
</comment>
<comment type="catalytic activity">
    <reaction evidence="2">
        <text>(S)-lactate + NAD(+) = pyruvate + NADH + H(+)</text>
        <dbReference type="Rhea" id="RHEA:23444"/>
        <dbReference type="ChEBI" id="CHEBI:15361"/>
        <dbReference type="ChEBI" id="CHEBI:15378"/>
        <dbReference type="ChEBI" id="CHEBI:16651"/>
        <dbReference type="ChEBI" id="CHEBI:57540"/>
        <dbReference type="ChEBI" id="CHEBI:57945"/>
        <dbReference type="EC" id="1.1.1.27"/>
    </reaction>
    <physiologicalReaction direction="left-to-right" evidence="2">
        <dbReference type="Rhea" id="RHEA:23445"/>
    </physiologicalReaction>
    <physiologicalReaction direction="right-to-left" evidence="2">
        <dbReference type="Rhea" id="RHEA:23446"/>
    </physiologicalReaction>
</comment>
<comment type="pathway">
    <text evidence="2">Fermentation; pyruvate fermentation to lactate; (S)-lactate from pyruvate: step 1/1.</text>
</comment>
<comment type="subunit">
    <text evidence="1">Homotetramer.</text>
</comment>
<comment type="subcellular location">
    <subcellularLocation>
        <location evidence="1">Cytoplasm</location>
    </subcellularLocation>
</comment>
<comment type="similarity">
    <text evidence="3">Belongs to the LDH/MDH superfamily. LDH family.</text>
</comment>
<proteinExistence type="evidence at transcript level"/>
<dbReference type="EC" id="1.1.1.27" evidence="2"/>
<dbReference type="EMBL" id="AF079825">
    <property type="protein sequence ID" value="AAC63283.1"/>
    <property type="molecule type" value="mRNA"/>
</dbReference>
<dbReference type="RefSeq" id="XP_063757072.1">
    <property type="nucleotide sequence ID" value="XM_063901002.1"/>
</dbReference>
<dbReference type="SMR" id="O93542"/>
<dbReference type="GeneID" id="134876135"/>
<dbReference type="UniPathway" id="UPA00554">
    <property type="reaction ID" value="UER00611"/>
</dbReference>
<dbReference type="GO" id="GO:0005737">
    <property type="term" value="C:cytoplasm"/>
    <property type="evidence" value="ECO:0007669"/>
    <property type="project" value="UniProtKB-SubCell"/>
</dbReference>
<dbReference type="GO" id="GO:0004459">
    <property type="term" value="F:L-lactate dehydrogenase activity"/>
    <property type="evidence" value="ECO:0007669"/>
    <property type="project" value="UniProtKB-EC"/>
</dbReference>
<dbReference type="GO" id="GO:0006089">
    <property type="term" value="P:lactate metabolic process"/>
    <property type="evidence" value="ECO:0007669"/>
    <property type="project" value="TreeGrafter"/>
</dbReference>
<dbReference type="CDD" id="cd05293">
    <property type="entry name" value="LDH_1"/>
    <property type="match status" value="1"/>
</dbReference>
<dbReference type="FunFam" id="3.40.50.720:FF:000029">
    <property type="entry name" value="L-lactate dehydrogenase A chain"/>
    <property type="match status" value="1"/>
</dbReference>
<dbReference type="FunFam" id="3.90.110.10:FF:000003">
    <property type="entry name" value="L-lactate dehydrogenase A chain"/>
    <property type="match status" value="1"/>
</dbReference>
<dbReference type="Gene3D" id="3.90.110.10">
    <property type="entry name" value="Lactate dehydrogenase/glycoside hydrolase, family 4, C-terminal"/>
    <property type="match status" value="1"/>
</dbReference>
<dbReference type="Gene3D" id="3.40.50.720">
    <property type="entry name" value="NAD(P)-binding Rossmann-like Domain"/>
    <property type="match status" value="1"/>
</dbReference>
<dbReference type="HAMAP" id="MF_00488">
    <property type="entry name" value="Lactate_dehydrog"/>
    <property type="match status" value="1"/>
</dbReference>
<dbReference type="InterPro" id="IPR001557">
    <property type="entry name" value="L-lactate/malate_DH"/>
</dbReference>
<dbReference type="InterPro" id="IPR011304">
    <property type="entry name" value="L-lactate_DH"/>
</dbReference>
<dbReference type="InterPro" id="IPR018177">
    <property type="entry name" value="L-lactate_DH_AS"/>
</dbReference>
<dbReference type="InterPro" id="IPR022383">
    <property type="entry name" value="Lactate/malate_DH_C"/>
</dbReference>
<dbReference type="InterPro" id="IPR001236">
    <property type="entry name" value="Lactate/malate_DH_N"/>
</dbReference>
<dbReference type="InterPro" id="IPR015955">
    <property type="entry name" value="Lactate_DH/Glyco_Ohase_4_C"/>
</dbReference>
<dbReference type="InterPro" id="IPR036291">
    <property type="entry name" value="NAD(P)-bd_dom_sf"/>
</dbReference>
<dbReference type="NCBIfam" id="TIGR01771">
    <property type="entry name" value="L-LDH-NAD"/>
    <property type="match status" value="1"/>
</dbReference>
<dbReference type="PANTHER" id="PTHR43128">
    <property type="entry name" value="L-2-HYDROXYCARBOXYLATE DEHYDROGENASE (NAD(P)(+))"/>
    <property type="match status" value="1"/>
</dbReference>
<dbReference type="PANTHER" id="PTHR43128:SF10">
    <property type="entry name" value="L-LACTATE DEHYDROGENASE A CHAIN"/>
    <property type="match status" value="1"/>
</dbReference>
<dbReference type="Pfam" id="PF02866">
    <property type="entry name" value="Ldh_1_C"/>
    <property type="match status" value="1"/>
</dbReference>
<dbReference type="Pfam" id="PF00056">
    <property type="entry name" value="Ldh_1_N"/>
    <property type="match status" value="1"/>
</dbReference>
<dbReference type="PIRSF" id="PIRSF000102">
    <property type="entry name" value="Lac_mal_DH"/>
    <property type="match status" value="1"/>
</dbReference>
<dbReference type="PRINTS" id="PR00086">
    <property type="entry name" value="LLDHDRGNASE"/>
</dbReference>
<dbReference type="SUPFAM" id="SSF56327">
    <property type="entry name" value="LDH C-terminal domain-like"/>
    <property type="match status" value="1"/>
</dbReference>
<dbReference type="SUPFAM" id="SSF51735">
    <property type="entry name" value="NAD(P)-binding Rossmann-fold domains"/>
    <property type="match status" value="1"/>
</dbReference>
<dbReference type="PROSITE" id="PS00064">
    <property type="entry name" value="L_LDH"/>
    <property type="match status" value="1"/>
</dbReference>
<protein>
    <recommendedName>
        <fullName>L-lactate dehydrogenase A chain</fullName>
        <shortName>LDH-A</shortName>
        <ecNumber evidence="2">1.1.1.27</ecNumber>
    </recommendedName>
</protein>
<keyword id="KW-0963">Cytoplasm</keyword>
<keyword id="KW-0520">NAD</keyword>
<keyword id="KW-0560">Oxidoreductase</keyword>
<gene>
    <name type="primary">ldha</name>
</gene>
<organism>
    <name type="scientific">Eleginops maclovinus</name>
    <name type="common">Patagonian blennie</name>
    <name type="synonym">Eleginus maclovinus</name>
    <dbReference type="NCBI Taxonomy" id="56733"/>
    <lineage>
        <taxon>Eukaryota</taxon>
        <taxon>Metazoa</taxon>
        <taxon>Chordata</taxon>
        <taxon>Craniata</taxon>
        <taxon>Vertebrata</taxon>
        <taxon>Euteleostomi</taxon>
        <taxon>Actinopterygii</taxon>
        <taxon>Neopterygii</taxon>
        <taxon>Teleostei</taxon>
        <taxon>Neoteleostei</taxon>
        <taxon>Acanthomorphata</taxon>
        <taxon>Eupercaria</taxon>
        <taxon>Perciformes</taxon>
        <taxon>Notothenioidei</taxon>
        <taxon>Eleginopidae</taxon>
        <taxon>Eleginops</taxon>
    </lineage>
</organism>
<feature type="initiator methionine" description="Removed" evidence="1">
    <location>
        <position position="1"/>
    </location>
</feature>
<feature type="chain" id="PRO_0000168437" description="L-lactate dehydrogenase A chain">
    <location>
        <begin position="2"/>
        <end position="332"/>
    </location>
</feature>
<feature type="active site" description="Proton acceptor" evidence="1">
    <location>
        <position position="193"/>
    </location>
</feature>
<feature type="binding site" evidence="1">
    <location>
        <begin position="29"/>
        <end position="57"/>
    </location>
    <ligand>
        <name>NAD(+)</name>
        <dbReference type="ChEBI" id="CHEBI:57540"/>
    </ligand>
</feature>
<feature type="binding site" evidence="1">
    <location>
        <position position="99"/>
    </location>
    <ligand>
        <name>NAD(+)</name>
        <dbReference type="ChEBI" id="CHEBI:57540"/>
    </ligand>
</feature>
<feature type="binding site" evidence="1">
    <location>
        <position position="106"/>
    </location>
    <ligand>
        <name>substrate</name>
    </ligand>
</feature>
<feature type="binding site" evidence="1">
    <location>
        <position position="138"/>
    </location>
    <ligand>
        <name>NAD(+)</name>
        <dbReference type="ChEBI" id="CHEBI:57540"/>
    </ligand>
</feature>
<feature type="binding site" evidence="1">
    <location>
        <position position="138"/>
    </location>
    <ligand>
        <name>substrate</name>
    </ligand>
</feature>
<feature type="binding site" evidence="1">
    <location>
        <position position="169"/>
    </location>
    <ligand>
        <name>substrate</name>
    </ligand>
</feature>
<feature type="binding site" evidence="1">
    <location>
        <position position="248"/>
    </location>
    <ligand>
        <name>substrate</name>
    </ligand>
</feature>
<evidence type="ECO:0000250" key="1"/>
<evidence type="ECO:0000250" key="2">
    <source>
        <dbReference type="UniProtKB" id="P00338"/>
    </source>
</evidence>
<evidence type="ECO:0000305" key="3"/>
<sequence>MSTKEKLISHVMKEEPVGSRNKVTVVGVGMVGMASAISILLKDLCDELAMVDVMEDKLKGEVMDLQHGSLFLKTHKIVGDKDYSVTANSKLVVVTAGARQQEGESRLNLVQRNVNIFKFIIPNIVKYSPNCILMVVSNPVDILTYVAWKLSGFPRHRVLGSGTNLDSARFRHLIGEKLNLHPSSCHAWIIGEHGDSSVPVWSGLNVAGVSLQGLNPQMGTEGDSENWKAIHKEVVDGAYEVIKLKGYTSWAIGMSVADLVESILKNLHKVHPVSTLVQGMHGVKDEVFLSVPCVLGNSGLTDVVHMTLKAEEEKQVQNSAETLWGVQKELTL</sequence>